<organism>
    <name type="scientific">Acinetobacter baumannii (strain SDF)</name>
    <dbReference type="NCBI Taxonomy" id="509170"/>
    <lineage>
        <taxon>Bacteria</taxon>
        <taxon>Pseudomonadati</taxon>
        <taxon>Pseudomonadota</taxon>
        <taxon>Gammaproteobacteria</taxon>
        <taxon>Moraxellales</taxon>
        <taxon>Moraxellaceae</taxon>
        <taxon>Acinetobacter</taxon>
        <taxon>Acinetobacter calcoaceticus/baumannii complex</taxon>
    </lineage>
</organism>
<evidence type="ECO:0000255" key="1">
    <source>
        <dbReference type="HAMAP-Rule" id="MF_01384"/>
    </source>
</evidence>
<dbReference type="EMBL" id="CU468230">
    <property type="protein sequence ID" value="CAP01691.1"/>
    <property type="molecule type" value="Genomic_DNA"/>
</dbReference>
<dbReference type="SMR" id="B0VSC3"/>
<dbReference type="KEGG" id="abm:ABSDF2378"/>
<dbReference type="HOGENOM" id="CLU_056339_0_0_6"/>
<dbReference type="Proteomes" id="UP000001741">
    <property type="component" value="Chromosome"/>
</dbReference>
<dbReference type="GO" id="GO:0005737">
    <property type="term" value="C:cytoplasm"/>
    <property type="evidence" value="ECO:0007669"/>
    <property type="project" value="UniProtKB-SubCell"/>
</dbReference>
<dbReference type="GO" id="GO:0016151">
    <property type="term" value="F:nickel cation binding"/>
    <property type="evidence" value="ECO:0007669"/>
    <property type="project" value="UniProtKB-UniRule"/>
</dbReference>
<dbReference type="HAMAP" id="MF_01384">
    <property type="entry name" value="UreD"/>
    <property type="match status" value="1"/>
</dbReference>
<dbReference type="InterPro" id="IPR002669">
    <property type="entry name" value="UreD"/>
</dbReference>
<dbReference type="PANTHER" id="PTHR33643">
    <property type="entry name" value="UREASE ACCESSORY PROTEIN D"/>
    <property type="match status" value="1"/>
</dbReference>
<dbReference type="PANTHER" id="PTHR33643:SF1">
    <property type="entry name" value="UREASE ACCESSORY PROTEIN D"/>
    <property type="match status" value="1"/>
</dbReference>
<dbReference type="Pfam" id="PF01774">
    <property type="entry name" value="UreD"/>
    <property type="match status" value="1"/>
</dbReference>
<reference key="1">
    <citation type="journal article" date="2008" name="PLoS ONE">
        <title>Comparative analysis of Acinetobacters: three genomes for three lifestyles.</title>
        <authorList>
            <person name="Vallenet D."/>
            <person name="Nordmann P."/>
            <person name="Barbe V."/>
            <person name="Poirel L."/>
            <person name="Mangenot S."/>
            <person name="Bataille E."/>
            <person name="Dossat C."/>
            <person name="Gas S."/>
            <person name="Kreimeyer A."/>
            <person name="Lenoble P."/>
            <person name="Oztas S."/>
            <person name="Poulain J."/>
            <person name="Segurens B."/>
            <person name="Robert C."/>
            <person name="Abergel C."/>
            <person name="Claverie J.-M."/>
            <person name="Raoult D."/>
            <person name="Medigue C."/>
            <person name="Weissenbach J."/>
            <person name="Cruveiller S."/>
        </authorList>
    </citation>
    <scope>NUCLEOTIDE SEQUENCE [LARGE SCALE GENOMIC DNA]</scope>
    <source>
        <strain>SDF</strain>
    </source>
</reference>
<keyword id="KW-0143">Chaperone</keyword>
<keyword id="KW-0963">Cytoplasm</keyword>
<keyword id="KW-0996">Nickel insertion</keyword>
<feature type="chain" id="PRO_1000145085" description="Urease accessory protein UreD">
    <location>
        <begin position="1"/>
        <end position="291"/>
    </location>
</feature>
<accession>B0VSC3</accession>
<gene>
    <name evidence="1" type="primary">ureD</name>
    <name type="ordered locus">ABSDF2378</name>
</gene>
<protein>
    <recommendedName>
        <fullName evidence="1">Urease accessory protein UreD</fullName>
    </recommendedName>
</protein>
<sequence length="291" mass="33858">MNRIQQTFQTSSAPFWYAQLELGFCYENSRTIMSHRKHYGPVRVQKMLWPEKTGVCHAIIVHPPAGIAGGDHLTFQIETERQAHAVITTPGAGKWYRTNGKQAFQHIYLNVKDDSILEWMPQETMLFDGALAHSETDIHLEQTASFIGWDMLVLGRQARAENFVQGGYHNQFKLWRKNKLLVADTLYFEGGDRWLSSCLGMNNQAVMASFWAVPPEKFRSSFYLEQHIELIRELIMRMDVPVTLTLLEDVLCARFLGNDVRRCHDAFAAIRAKLRRYWFDLDEEFPRIWKT</sequence>
<name>URED_ACIBS</name>
<comment type="function">
    <text evidence="1">Required for maturation of urease via the functional incorporation of the urease nickel metallocenter.</text>
</comment>
<comment type="subunit">
    <text evidence="1">UreD, UreF and UreG form a complex that acts as a GTP-hydrolysis-dependent molecular chaperone, activating the urease apoprotein by helping to assemble the nickel containing metallocenter of UreC. The UreE protein probably delivers the nickel.</text>
</comment>
<comment type="subcellular location">
    <subcellularLocation>
        <location evidence="1">Cytoplasm</location>
    </subcellularLocation>
</comment>
<comment type="similarity">
    <text evidence="1">Belongs to the UreD family.</text>
</comment>
<proteinExistence type="inferred from homology"/>